<gene>
    <name evidence="8 10" type="primary">Rnf5</name>
    <name type="synonym">Ng2</name>
</gene>
<name>RNF5_MOUSE</name>
<dbReference type="EC" id="2.3.2.27" evidence="1"/>
<dbReference type="EMBL" id="AF030001">
    <property type="protein sequence ID" value="AAB82008.1"/>
    <property type="molecule type" value="Genomic_DNA"/>
</dbReference>
<dbReference type="EMBL" id="BC016449">
    <property type="protein sequence ID" value="AAH16449.1"/>
    <property type="molecule type" value="mRNA"/>
</dbReference>
<dbReference type="CCDS" id="CCDS28650.1"/>
<dbReference type="PIR" id="T09063">
    <property type="entry name" value="T09063"/>
</dbReference>
<dbReference type="RefSeq" id="NP_062276.1">
    <property type="nucleotide sequence ID" value="NM_019403.3"/>
</dbReference>
<dbReference type="SMR" id="O35445"/>
<dbReference type="BioGRID" id="207597">
    <property type="interactions" value="2"/>
</dbReference>
<dbReference type="FunCoup" id="O35445">
    <property type="interactions" value="912"/>
</dbReference>
<dbReference type="MINT" id="O35445"/>
<dbReference type="STRING" id="10090.ENSMUSP00000015622"/>
<dbReference type="iPTMnet" id="O35445"/>
<dbReference type="PhosphoSitePlus" id="O35445"/>
<dbReference type="PaxDb" id="10090-ENSMUSP00000015622"/>
<dbReference type="PeptideAtlas" id="O35445"/>
<dbReference type="ProteomicsDB" id="301627"/>
<dbReference type="Pumba" id="O35445"/>
<dbReference type="Antibodypedia" id="28471">
    <property type="antibodies" value="230 antibodies from 30 providers"/>
</dbReference>
<dbReference type="DNASU" id="54197"/>
<dbReference type="Ensembl" id="ENSMUST00000015622.8">
    <property type="protein sequence ID" value="ENSMUSP00000015622.8"/>
    <property type="gene ID" value="ENSMUSG00000015478.14"/>
</dbReference>
<dbReference type="GeneID" id="54197"/>
<dbReference type="KEGG" id="mmu:54197"/>
<dbReference type="UCSC" id="uc008ccy.1">
    <property type="organism name" value="mouse"/>
</dbReference>
<dbReference type="AGR" id="MGI:1860076"/>
<dbReference type="CTD" id="6048"/>
<dbReference type="MGI" id="MGI:1860076">
    <property type="gene designation" value="Rnf5"/>
</dbReference>
<dbReference type="VEuPathDB" id="HostDB:ENSMUSG00000015478"/>
<dbReference type="eggNOG" id="KOG0823">
    <property type="taxonomic scope" value="Eukaryota"/>
</dbReference>
<dbReference type="GeneTree" id="ENSGT00390000014107"/>
<dbReference type="HOGENOM" id="CLU_055198_2_1_1"/>
<dbReference type="InParanoid" id="O35445"/>
<dbReference type="OMA" id="RAAFECN"/>
<dbReference type="OrthoDB" id="302966at2759"/>
<dbReference type="PhylomeDB" id="O35445"/>
<dbReference type="TreeFam" id="TF317334"/>
<dbReference type="Reactome" id="R-MMU-382556">
    <property type="pathway name" value="ABC-family proteins mediated transport"/>
</dbReference>
<dbReference type="UniPathway" id="UPA00143"/>
<dbReference type="BioGRID-ORCS" id="54197">
    <property type="hits" value="1 hit in 79 CRISPR screens"/>
</dbReference>
<dbReference type="ChiTaRS" id="Rnf5">
    <property type="organism name" value="mouse"/>
</dbReference>
<dbReference type="PRO" id="PR:O35445"/>
<dbReference type="Proteomes" id="UP000000589">
    <property type="component" value="Chromosome 17"/>
</dbReference>
<dbReference type="RNAct" id="O35445">
    <property type="molecule type" value="protein"/>
</dbReference>
<dbReference type="Bgee" id="ENSMUSG00000015478">
    <property type="expression patterns" value="Expressed in embryonic brain and 143 other cell types or tissues"/>
</dbReference>
<dbReference type="GO" id="GO:0005789">
    <property type="term" value="C:endoplasmic reticulum membrane"/>
    <property type="evidence" value="ECO:0007669"/>
    <property type="project" value="UniProtKB-SubCell"/>
</dbReference>
<dbReference type="GO" id="GO:0016020">
    <property type="term" value="C:membrane"/>
    <property type="evidence" value="ECO:0000314"/>
    <property type="project" value="MGI"/>
</dbReference>
<dbReference type="GO" id="GO:0031966">
    <property type="term" value="C:mitochondrial membrane"/>
    <property type="evidence" value="ECO:0007669"/>
    <property type="project" value="UniProtKB-SubCell"/>
</dbReference>
<dbReference type="GO" id="GO:0005886">
    <property type="term" value="C:plasma membrane"/>
    <property type="evidence" value="ECO:0007669"/>
    <property type="project" value="UniProtKB-SubCell"/>
</dbReference>
<dbReference type="GO" id="GO:0042802">
    <property type="term" value="F:identical protein binding"/>
    <property type="evidence" value="ECO:0007669"/>
    <property type="project" value="Ensembl"/>
</dbReference>
<dbReference type="GO" id="GO:0044877">
    <property type="term" value="F:protein-containing complex binding"/>
    <property type="evidence" value="ECO:0007669"/>
    <property type="project" value="Ensembl"/>
</dbReference>
<dbReference type="GO" id="GO:0061630">
    <property type="term" value="F:ubiquitin protein ligase activity"/>
    <property type="evidence" value="ECO:0007669"/>
    <property type="project" value="InterPro"/>
</dbReference>
<dbReference type="GO" id="GO:0004842">
    <property type="term" value="F:ubiquitin-protein transferase activity"/>
    <property type="evidence" value="ECO:0000250"/>
    <property type="project" value="UniProtKB"/>
</dbReference>
<dbReference type="GO" id="GO:0008270">
    <property type="term" value="F:zinc ion binding"/>
    <property type="evidence" value="ECO:0007669"/>
    <property type="project" value="UniProtKB-KW"/>
</dbReference>
<dbReference type="GO" id="GO:0036503">
    <property type="term" value="P:ERAD pathway"/>
    <property type="evidence" value="ECO:0000250"/>
    <property type="project" value="UniProtKB"/>
</dbReference>
<dbReference type="GO" id="GO:0010507">
    <property type="term" value="P:negative regulation of autophagy"/>
    <property type="evidence" value="ECO:0000315"/>
    <property type="project" value="MGI"/>
</dbReference>
<dbReference type="GO" id="GO:0031648">
    <property type="term" value="P:protein destabilization"/>
    <property type="evidence" value="ECO:0000314"/>
    <property type="project" value="MGI"/>
</dbReference>
<dbReference type="GO" id="GO:0070936">
    <property type="term" value="P:protein K48-linked ubiquitination"/>
    <property type="evidence" value="ECO:0007669"/>
    <property type="project" value="Ensembl"/>
</dbReference>
<dbReference type="GO" id="GO:0070534">
    <property type="term" value="P:protein K63-linked ubiquitination"/>
    <property type="evidence" value="ECO:0000250"/>
    <property type="project" value="UniProtKB"/>
</dbReference>
<dbReference type="GO" id="GO:0016567">
    <property type="term" value="P:protein ubiquitination"/>
    <property type="evidence" value="ECO:0000314"/>
    <property type="project" value="MGI"/>
</dbReference>
<dbReference type="GO" id="GO:2000785">
    <property type="term" value="P:regulation of autophagosome assembly"/>
    <property type="evidence" value="ECO:0000315"/>
    <property type="project" value="MGI"/>
</dbReference>
<dbReference type="GO" id="GO:0009617">
    <property type="term" value="P:response to bacterium"/>
    <property type="evidence" value="ECO:0000315"/>
    <property type="project" value="MGI"/>
</dbReference>
<dbReference type="GO" id="GO:0006511">
    <property type="term" value="P:ubiquitin-dependent protein catabolic process"/>
    <property type="evidence" value="ECO:0007669"/>
    <property type="project" value="Ensembl"/>
</dbReference>
<dbReference type="FunFam" id="3.30.40.10:FF:000062">
    <property type="entry name" value="E3 ubiquitin-protein ligase RNF185"/>
    <property type="match status" value="1"/>
</dbReference>
<dbReference type="Gene3D" id="3.30.40.10">
    <property type="entry name" value="Zinc/RING finger domain, C3HC4 (zinc finger)"/>
    <property type="match status" value="1"/>
</dbReference>
<dbReference type="InterPro" id="IPR045103">
    <property type="entry name" value="RNF5/RNF185-like"/>
</dbReference>
<dbReference type="InterPro" id="IPR001841">
    <property type="entry name" value="Znf_RING"/>
</dbReference>
<dbReference type="InterPro" id="IPR013083">
    <property type="entry name" value="Znf_RING/FYVE/PHD"/>
</dbReference>
<dbReference type="InterPro" id="IPR017907">
    <property type="entry name" value="Znf_RING_CS"/>
</dbReference>
<dbReference type="PANTHER" id="PTHR12313">
    <property type="entry name" value="E3 UBIQUITIN-PROTEIN LIGASE RNF5-RELATED"/>
    <property type="match status" value="1"/>
</dbReference>
<dbReference type="Pfam" id="PF13920">
    <property type="entry name" value="zf-C3HC4_3"/>
    <property type="match status" value="1"/>
</dbReference>
<dbReference type="SMART" id="SM00184">
    <property type="entry name" value="RING"/>
    <property type="match status" value="1"/>
</dbReference>
<dbReference type="SUPFAM" id="SSF57850">
    <property type="entry name" value="RING/U-box"/>
    <property type="match status" value="1"/>
</dbReference>
<dbReference type="PROSITE" id="PS00518">
    <property type="entry name" value="ZF_RING_1"/>
    <property type="match status" value="1"/>
</dbReference>
<dbReference type="PROSITE" id="PS50089">
    <property type="entry name" value="ZF_RING_2"/>
    <property type="match status" value="1"/>
</dbReference>
<proteinExistence type="evidence at protein level"/>
<sequence>MAAAEEEDGGPEGPNRERGGASATFECNICLETAREAVVSVCGHLYCWPCLHQWLETRPDRQECPVCKAGISREKVVPLYGRGSQKPQDPRLKTPPRPQGQRPAPESRGGFQPFGDAGGFHFSFGVGAFPFGFFTTVFNAHEPFRRGAGVDLGQGHPASSWQDSLFLFLAIFFFFWLLSI</sequence>
<evidence type="ECO:0000250" key="1">
    <source>
        <dbReference type="UniProtKB" id="Q99942"/>
    </source>
</evidence>
<evidence type="ECO:0000255" key="2"/>
<evidence type="ECO:0000255" key="3">
    <source>
        <dbReference type="PROSITE-ProRule" id="PRU00175"/>
    </source>
</evidence>
<evidence type="ECO:0000256" key="4">
    <source>
        <dbReference type="SAM" id="MobiDB-lite"/>
    </source>
</evidence>
<evidence type="ECO:0000269" key="5">
    <source>
    </source>
</evidence>
<evidence type="ECO:0000269" key="6">
    <source>
    </source>
</evidence>
<evidence type="ECO:0000269" key="7">
    <source>
    </source>
</evidence>
<evidence type="ECO:0000303" key="8">
    <source>
    </source>
</evidence>
<evidence type="ECO:0000305" key="9"/>
<evidence type="ECO:0000312" key="10">
    <source>
        <dbReference type="MGI" id="MGI:1860076"/>
    </source>
</evidence>
<feature type="initiator methionine" description="Removed" evidence="1">
    <location>
        <position position="1"/>
    </location>
</feature>
<feature type="chain" id="PRO_0000240394" description="E3 ubiquitin-protein ligase RNF5">
    <location>
        <begin position="2"/>
        <end position="180"/>
    </location>
</feature>
<feature type="transmembrane region" description="Helical" evidence="2">
    <location>
        <begin position="118"/>
        <end position="138"/>
    </location>
</feature>
<feature type="transmembrane region" description="Helical" evidence="2">
    <location>
        <begin position="160"/>
        <end position="180"/>
    </location>
</feature>
<feature type="zinc finger region" description="RING-type" evidence="3">
    <location>
        <begin position="27"/>
        <end position="68"/>
    </location>
</feature>
<feature type="region of interest" description="Disordered" evidence="4">
    <location>
        <begin position="79"/>
        <end position="110"/>
    </location>
</feature>
<feature type="modified residue" description="N-acetylalanine" evidence="1">
    <location>
        <position position="2"/>
    </location>
</feature>
<feature type="modified residue" description="Phosphoserine" evidence="1">
    <location>
        <position position="84"/>
    </location>
</feature>
<feature type="modified residue" description="Phosphothreonine" evidence="1">
    <location>
        <position position="94"/>
    </location>
</feature>
<feature type="modified residue" description="Phosphoserine" evidence="1">
    <location>
        <position position="107"/>
    </location>
</feature>
<organism>
    <name type="scientific">Mus musculus</name>
    <name type="common">Mouse</name>
    <dbReference type="NCBI Taxonomy" id="10090"/>
    <lineage>
        <taxon>Eukaryota</taxon>
        <taxon>Metazoa</taxon>
        <taxon>Chordata</taxon>
        <taxon>Craniata</taxon>
        <taxon>Vertebrata</taxon>
        <taxon>Euteleostomi</taxon>
        <taxon>Mammalia</taxon>
        <taxon>Eutheria</taxon>
        <taxon>Euarchontoglires</taxon>
        <taxon>Glires</taxon>
        <taxon>Rodentia</taxon>
        <taxon>Myomorpha</taxon>
        <taxon>Muroidea</taxon>
        <taxon>Muridae</taxon>
        <taxon>Murinae</taxon>
        <taxon>Mus</taxon>
        <taxon>Mus</taxon>
    </lineage>
</organism>
<protein>
    <recommendedName>
        <fullName evidence="9">E3 ubiquitin-protein ligase RNF5</fullName>
        <ecNumber evidence="1">2.3.2.27</ecNumber>
    </recommendedName>
    <alternativeName>
        <fullName evidence="8">RING finger protein 5</fullName>
    </alternativeName>
</protein>
<accession>O35445</accession>
<reference key="1">
    <citation type="journal article" date="2003" name="Genome Res.">
        <title>Analysis of the gene-dense major histocompatibility complex class III region and its comparison to mouse.</title>
        <authorList>
            <person name="Xie T."/>
            <person name="Rowen L."/>
            <person name="Aguado B."/>
            <person name="Ahearn M.E."/>
            <person name="Madan A."/>
            <person name="Qin S."/>
            <person name="Campbell R.D."/>
            <person name="Hood L."/>
        </authorList>
    </citation>
    <scope>NUCLEOTIDE SEQUENCE [LARGE SCALE GENOMIC DNA]</scope>
    <source>
        <strain>129</strain>
    </source>
</reference>
<reference key="2">
    <citation type="journal article" date="2004" name="Genome Res.">
        <title>The status, quality, and expansion of the NIH full-length cDNA project: the Mammalian Gene Collection (MGC).</title>
        <authorList>
            <consortium name="The MGC Project Team"/>
        </authorList>
    </citation>
    <scope>NUCLEOTIDE SEQUENCE [LARGE SCALE MRNA]</scope>
    <source>
        <strain>FVB/N</strain>
        <tissue>Salivary gland</tissue>
    </source>
</reference>
<reference key="3">
    <citation type="journal article" date="2003" name="Mol. Cell. Biol.">
        <title>RNF5, a RING finger protein that regulates cell motility by targeting paxillin ubiquitination and altered localization.</title>
        <authorList>
            <person name="Didier C."/>
            <person name="Broday L."/>
            <person name="Bhoumik A."/>
            <person name="Israeli S."/>
            <person name="Takahashi S."/>
            <person name="Nakayama K."/>
            <person name="Thomas S.M."/>
            <person name="Turner C.E."/>
            <person name="Henderson S."/>
            <person name="Sabe H."/>
            <person name="Ronai Z."/>
        </authorList>
    </citation>
    <scope>SUBCELLULAR LOCATION</scope>
</reference>
<reference key="4">
    <citation type="journal article" date="2005" name="Mol. Cell. Biol.">
        <title>JAMP, a Jun N-terminal kinase 1 (JNK1)-associated membrane protein, regulates duration of JNK activity.</title>
        <authorList>
            <person name="Kadoya T."/>
            <person name="Khurana A."/>
            <person name="Tcherpakov M."/>
            <person name="Bromberg K.D."/>
            <person name="Didier C."/>
            <person name="Broday L."/>
            <person name="Asahara T."/>
            <person name="Bhoumik A."/>
            <person name="Ronai Z."/>
        </authorList>
    </citation>
    <scope>INTERACTION WITH JKAMP</scope>
</reference>
<reference key="5">
    <citation type="journal article" date="2010" name="Cell">
        <title>A tissue-specific atlas of mouse protein phosphorylation and expression.</title>
        <authorList>
            <person name="Huttlin E.L."/>
            <person name="Jedrychowski M.P."/>
            <person name="Elias J.E."/>
            <person name="Goswami T."/>
            <person name="Rad R."/>
            <person name="Beausoleil S.A."/>
            <person name="Villen J."/>
            <person name="Haas W."/>
            <person name="Sowa M.E."/>
            <person name="Gygi S.P."/>
        </authorList>
    </citation>
    <scope>IDENTIFICATION BY MASS SPECTROMETRY [LARGE SCALE ANALYSIS]</scope>
    <source>
        <tissue>Liver</tissue>
    </source>
</reference>
<reference key="6">
    <citation type="journal article" date="2012" name="PLoS Genet.">
        <title>Regulation of ATG4B stability by RNF5 limits basal levels of autophagy and influences susceptibility to bacterial infection.</title>
        <authorList>
            <person name="Kuang E."/>
            <person name="Okumura C.Y."/>
            <person name="Sheffy-Levin S."/>
            <person name="Varsano T."/>
            <person name="Shu V.C."/>
            <person name="Qi J."/>
            <person name="Niesman I.R."/>
            <person name="Yang H.J."/>
            <person name="Lopez-Otin C."/>
            <person name="Yang W.Y."/>
            <person name="Reed J.C."/>
            <person name="Broday L."/>
            <person name="Nizet V."/>
            <person name="Ronai Z.A."/>
        </authorList>
    </citation>
    <scope>FUNCTION</scope>
    <scope>PATHWAY</scope>
    <scope>DISRUPTION PHENOTYPE</scope>
</reference>
<keyword id="KW-0007">Acetylation</keyword>
<keyword id="KW-1003">Cell membrane</keyword>
<keyword id="KW-0256">Endoplasmic reticulum</keyword>
<keyword id="KW-0472">Membrane</keyword>
<keyword id="KW-0479">Metal-binding</keyword>
<keyword id="KW-0496">Mitochondrion</keyword>
<keyword id="KW-0597">Phosphoprotein</keyword>
<keyword id="KW-1185">Reference proteome</keyword>
<keyword id="KW-0808">Transferase</keyword>
<keyword id="KW-0812">Transmembrane</keyword>
<keyword id="KW-1133">Transmembrane helix</keyword>
<keyword id="KW-0833">Ubl conjugation pathway</keyword>
<keyword id="KW-0862">Zinc</keyword>
<keyword id="KW-0863">Zinc-finger</keyword>
<comment type="function">
    <text evidence="1 7">Membrane-bound E3 ubiquitin-protein ligase that mediates ubiquitination of target proteins (PubMed:23093945). May function together with E2 ubiquitin-conjugating enzymes UBE2D1/UBCH5A and UBE2D2/UBC4 (By similarity). Mediates ubiquitination of PXN/paxillin,thereby regulating cell motility and localization of PXN/paxillin (By similarity). Mediates the 'Lys-63'-linked polyubiquitination of JKAMP thereby regulating JKAMP function by decreasing its association with components of the proteasome and ERAD; the ubiquitination appears to involve E2 ubiquitin-conjugating enzyme UBE2N (By similarity). Mediates the 'Lys-48'-linked polyubiquitination of STING1 at 'Lys-150' leading to its proteasomal degradation; the ubiquitination occurs in mitochondria after viral transfection and regulates antiviral responses (By similarity). Catalyzes ubiquitination and subsequent degradation of ATG4B, thereby inhibiting autophagy (PubMed:23093945).</text>
</comment>
<comment type="catalytic activity">
    <reaction evidence="1">
        <text>S-ubiquitinyl-[E2 ubiquitin-conjugating enzyme]-L-cysteine + [acceptor protein]-L-lysine = [E2 ubiquitin-conjugating enzyme]-L-cysteine + N(6)-ubiquitinyl-[acceptor protein]-L-lysine.</text>
        <dbReference type="EC" id="2.3.2.27"/>
    </reaction>
</comment>
<comment type="pathway">
    <text evidence="7">Protein modification; protein ubiquitination.</text>
</comment>
<comment type="subunit">
    <text evidence="1 6">Interacts with PXN (By similarity). Interacts with JKAMP (PubMed:16166642). Interacts with STING1; the interaction of endogenous proteins is dependent on viral infection (By similarity).</text>
</comment>
<comment type="subcellular location">
    <subcellularLocation>
        <location evidence="5">Cell membrane</location>
        <topology evidence="2">Multi-pass membrane protein</topology>
    </subcellularLocation>
    <subcellularLocation>
        <location evidence="1">Mitochondrion membrane</location>
        <topology evidence="2">Multi-pass membrane protein</topology>
    </subcellularLocation>
    <subcellularLocation>
        <location evidence="1">Endoplasmic reticulum membrane</location>
        <topology evidence="2">Multi-pass membrane protein</topology>
    </subcellularLocation>
    <text evidence="1">Predominantly located in the plasma membrane, with some localization occurring within cytoplasmic organelles.</text>
</comment>
<comment type="disruption phenotype">
    <text evidence="7">Mice are more resistant to lethal infections by group A Streptococcus due to increased autophagy (PubMed:23093945). Macrophages show increased autophagosomes and more efficient bacterial clearance (PubMed:23093945).</text>
</comment>
<comment type="similarity">
    <text evidence="9">Belongs to the RNF5 family.</text>
</comment>